<proteinExistence type="inferred from homology"/>
<reference key="1">
    <citation type="journal article" date="2007" name="PLoS ONE">
        <title>A glimpse of streptococcal toxic shock syndrome from comparative genomics of S. suis 2 Chinese isolates.</title>
        <authorList>
            <person name="Chen C."/>
            <person name="Tang J."/>
            <person name="Dong W."/>
            <person name="Wang C."/>
            <person name="Feng Y."/>
            <person name="Wang J."/>
            <person name="Zheng F."/>
            <person name="Pan X."/>
            <person name="Liu D."/>
            <person name="Li M."/>
            <person name="Song Y."/>
            <person name="Zhu X."/>
            <person name="Sun H."/>
            <person name="Feng T."/>
            <person name="Guo Z."/>
            <person name="Ju A."/>
            <person name="Ge J."/>
            <person name="Dong Y."/>
            <person name="Sun W."/>
            <person name="Jiang Y."/>
            <person name="Wang J."/>
            <person name="Yan J."/>
            <person name="Yang H."/>
            <person name="Wang X."/>
            <person name="Gao G.F."/>
            <person name="Yang R."/>
            <person name="Wang J."/>
            <person name="Yu J."/>
        </authorList>
    </citation>
    <scope>NUCLEOTIDE SEQUENCE [LARGE SCALE GENOMIC DNA]</scope>
    <source>
        <strain>98HAH33</strain>
    </source>
</reference>
<feature type="chain" id="PRO_1000065593" description="Replication initiation control protein YabA">
    <location>
        <begin position="1"/>
        <end position="105"/>
    </location>
</feature>
<feature type="binding site" evidence="1">
    <location>
        <position position="79"/>
    </location>
    <ligand>
        <name>Zn(2+)</name>
        <dbReference type="ChEBI" id="CHEBI:29105"/>
    </ligand>
</feature>
<feature type="binding site" evidence="1">
    <location>
        <position position="81"/>
    </location>
    <ligand>
        <name>Zn(2+)</name>
        <dbReference type="ChEBI" id="CHEBI:29105"/>
    </ligand>
</feature>
<feature type="binding site" evidence="1">
    <location>
        <position position="95"/>
    </location>
    <ligand>
        <name>Zn(2+)</name>
        <dbReference type="ChEBI" id="CHEBI:29105"/>
    </ligand>
</feature>
<feature type="binding site" evidence="1">
    <location>
        <position position="98"/>
    </location>
    <ligand>
        <name>Zn(2+)</name>
        <dbReference type="ChEBI" id="CHEBI:29105"/>
    </ligand>
</feature>
<organism>
    <name type="scientific">Streptococcus suis (strain 98HAH33)</name>
    <dbReference type="NCBI Taxonomy" id="391296"/>
    <lineage>
        <taxon>Bacteria</taxon>
        <taxon>Bacillati</taxon>
        <taxon>Bacillota</taxon>
        <taxon>Bacilli</taxon>
        <taxon>Lactobacillales</taxon>
        <taxon>Streptococcaceae</taxon>
        <taxon>Streptococcus</taxon>
    </lineage>
</organism>
<accession>A4W0D2</accession>
<name>YABA_STRS2</name>
<protein>
    <recommendedName>
        <fullName evidence="1">Replication initiation control protein YabA</fullName>
    </recommendedName>
</protein>
<comment type="function">
    <text evidence="1">Involved in control of chromosome replication initiation. Inhibits the cooperative binding of DnaA to the oriC region, thus negatively regulating initiation of chromosome replication. Inhibits the ability of DnaA-ATP to form a helix on DNA; does not disassemble preformed DnaA-DNA helices. Decreases the residence time of DnaA on the chromosome at its binding sites (oriC, replication forks and promoter-binding sites). Tethers DnaA to the replication machinery via the DNA polymerase beta sliding clamp subunit (dnaN). Associates with oriC and other DnaA targets on the chromosome in a DnaA-dependent manner.</text>
</comment>
<comment type="cofactor">
    <cofactor evidence="1">
        <name>Zn(2+)</name>
        <dbReference type="ChEBI" id="CHEBI:29105"/>
    </cofactor>
    <text evidence="1">Binds 1 zinc ion per subunit.</text>
</comment>
<comment type="subunit">
    <text evidence="1">Homotetramer. Interacts with both DnaA and DnaN, acting as a bridge between these two proteins.</text>
</comment>
<comment type="subcellular location">
    <subcellularLocation>
        <location evidence="1">Cytoplasm</location>
        <location evidence="1">Nucleoid</location>
    </subcellularLocation>
    <text evidence="1">Localizes in tight foci, which correspond to the replisome at mid-cell throughout the cell cycle.</text>
</comment>
<comment type="similarity">
    <text evidence="1">Belongs to the YabA family.</text>
</comment>
<gene>
    <name evidence="1" type="primary">yabA</name>
    <name type="ordered locus">SSU98_0663</name>
</gene>
<dbReference type="EMBL" id="CP000408">
    <property type="protein sequence ID" value="ABP91821.1"/>
    <property type="molecule type" value="Genomic_DNA"/>
</dbReference>
<dbReference type="SMR" id="A4W0D2"/>
<dbReference type="KEGG" id="ssv:SSU98_0663"/>
<dbReference type="HOGENOM" id="CLU_157169_0_0_9"/>
<dbReference type="BioCyc" id="SSUI391296:GI2E-713-MONOMER"/>
<dbReference type="GO" id="GO:0009295">
    <property type="term" value="C:nucleoid"/>
    <property type="evidence" value="ECO:0007669"/>
    <property type="project" value="UniProtKB-SubCell"/>
</dbReference>
<dbReference type="GO" id="GO:0006260">
    <property type="term" value="P:DNA replication"/>
    <property type="evidence" value="ECO:0007669"/>
    <property type="project" value="UniProtKB-UniRule"/>
</dbReference>
<dbReference type="HAMAP" id="MF_01159">
    <property type="entry name" value="YabA"/>
    <property type="match status" value="1"/>
</dbReference>
<dbReference type="InterPro" id="IPR010377">
    <property type="entry name" value="YabA"/>
</dbReference>
<dbReference type="NCBIfam" id="NF009640">
    <property type="entry name" value="PRK13169.1-1"/>
    <property type="match status" value="1"/>
</dbReference>
<dbReference type="Pfam" id="PF06156">
    <property type="entry name" value="YabA"/>
    <property type="match status" value="1"/>
</dbReference>
<dbReference type="PIRSF" id="PIRSF021439">
    <property type="entry name" value="DUF972"/>
    <property type="match status" value="1"/>
</dbReference>
<evidence type="ECO:0000255" key="1">
    <source>
        <dbReference type="HAMAP-Rule" id="MF_01159"/>
    </source>
</evidence>
<keyword id="KW-0963">Cytoplasm</keyword>
<keyword id="KW-0235">DNA replication</keyword>
<keyword id="KW-0236">DNA replication inhibitor</keyword>
<keyword id="KW-0479">Metal-binding</keyword>
<keyword id="KW-0862">Zinc</keyword>
<sequence length="105" mass="12273">MDKKEIFDALDDFSQNLLTTLAEVDAIKKHLQGVIDENTTLRLENSKLRERLEKEDKTGHKSSNFGKENLENIYEDGFHICTFSYGQRRDNDEPCMFCVELLNRD</sequence>